<organism>
    <name type="scientific">Xanthomonas oryzae pv. oryzae (strain MAFF 311018)</name>
    <dbReference type="NCBI Taxonomy" id="342109"/>
    <lineage>
        <taxon>Bacteria</taxon>
        <taxon>Pseudomonadati</taxon>
        <taxon>Pseudomonadota</taxon>
        <taxon>Gammaproteobacteria</taxon>
        <taxon>Lysobacterales</taxon>
        <taxon>Lysobacteraceae</taxon>
        <taxon>Xanthomonas</taxon>
    </lineage>
</organism>
<keyword id="KW-0413">Isomerase</keyword>
<proteinExistence type="inferred from homology"/>
<name>RPIA_XANOM</name>
<dbReference type="EC" id="5.3.1.6" evidence="1"/>
<dbReference type="EMBL" id="AP008229">
    <property type="protein sequence ID" value="BAE67778.1"/>
    <property type="molecule type" value="Genomic_DNA"/>
</dbReference>
<dbReference type="RefSeq" id="WP_011407781.1">
    <property type="nucleotide sequence ID" value="NC_007705.1"/>
</dbReference>
<dbReference type="SMR" id="Q2P6P9"/>
<dbReference type="KEGG" id="xom:XOO1023"/>
<dbReference type="HOGENOM" id="CLU_056590_1_1_6"/>
<dbReference type="UniPathway" id="UPA00115">
    <property type="reaction ID" value="UER00412"/>
</dbReference>
<dbReference type="GO" id="GO:0005829">
    <property type="term" value="C:cytosol"/>
    <property type="evidence" value="ECO:0007669"/>
    <property type="project" value="TreeGrafter"/>
</dbReference>
<dbReference type="GO" id="GO:0004751">
    <property type="term" value="F:ribose-5-phosphate isomerase activity"/>
    <property type="evidence" value="ECO:0007669"/>
    <property type="project" value="UniProtKB-UniRule"/>
</dbReference>
<dbReference type="GO" id="GO:0006014">
    <property type="term" value="P:D-ribose metabolic process"/>
    <property type="evidence" value="ECO:0007669"/>
    <property type="project" value="TreeGrafter"/>
</dbReference>
<dbReference type="GO" id="GO:0009052">
    <property type="term" value="P:pentose-phosphate shunt, non-oxidative branch"/>
    <property type="evidence" value="ECO:0007669"/>
    <property type="project" value="UniProtKB-UniRule"/>
</dbReference>
<dbReference type="CDD" id="cd01398">
    <property type="entry name" value="RPI_A"/>
    <property type="match status" value="1"/>
</dbReference>
<dbReference type="FunFam" id="3.30.70.260:FF:000004">
    <property type="entry name" value="Ribose-5-phosphate isomerase A"/>
    <property type="match status" value="1"/>
</dbReference>
<dbReference type="FunFam" id="3.40.50.1360:FF:000001">
    <property type="entry name" value="Ribose-5-phosphate isomerase A"/>
    <property type="match status" value="1"/>
</dbReference>
<dbReference type="Gene3D" id="3.30.70.260">
    <property type="match status" value="1"/>
</dbReference>
<dbReference type="Gene3D" id="3.40.50.1360">
    <property type="match status" value="1"/>
</dbReference>
<dbReference type="HAMAP" id="MF_00170">
    <property type="entry name" value="Rib_5P_isom_A"/>
    <property type="match status" value="1"/>
</dbReference>
<dbReference type="InterPro" id="IPR037171">
    <property type="entry name" value="NagB/RpiA_transferase-like"/>
</dbReference>
<dbReference type="InterPro" id="IPR020672">
    <property type="entry name" value="Ribose5P_isomerase_typA_subgr"/>
</dbReference>
<dbReference type="InterPro" id="IPR004788">
    <property type="entry name" value="Ribose5P_isomerase_type_A"/>
</dbReference>
<dbReference type="NCBIfam" id="NF001924">
    <property type="entry name" value="PRK00702.1"/>
    <property type="match status" value="1"/>
</dbReference>
<dbReference type="NCBIfam" id="TIGR00021">
    <property type="entry name" value="rpiA"/>
    <property type="match status" value="1"/>
</dbReference>
<dbReference type="PANTHER" id="PTHR11934">
    <property type="entry name" value="RIBOSE-5-PHOSPHATE ISOMERASE"/>
    <property type="match status" value="1"/>
</dbReference>
<dbReference type="PANTHER" id="PTHR11934:SF0">
    <property type="entry name" value="RIBOSE-5-PHOSPHATE ISOMERASE"/>
    <property type="match status" value="1"/>
</dbReference>
<dbReference type="Pfam" id="PF06026">
    <property type="entry name" value="Rib_5-P_isom_A"/>
    <property type="match status" value="1"/>
</dbReference>
<dbReference type="SUPFAM" id="SSF75445">
    <property type="entry name" value="D-ribose-5-phosphate isomerase (RpiA), lid domain"/>
    <property type="match status" value="1"/>
</dbReference>
<dbReference type="SUPFAM" id="SSF100950">
    <property type="entry name" value="NagB/RpiA/CoA transferase-like"/>
    <property type="match status" value="1"/>
</dbReference>
<protein>
    <recommendedName>
        <fullName evidence="1">Ribose-5-phosphate isomerase A</fullName>
        <ecNumber evidence="1">5.3.1.6</ecNumber>
    </recommendedName>
    <alternativeName>
        <fullName evidence="1">Phosphoriboisomerase A</fullName>
        <shortName evidence="1">PRI</shortName>
    </alternativeName>
</protein>
<sequence>MSEAKRLAAEKAIDYVEDGMIVGVGTGSTVAYFIDALGHIGHRIKGAVSSSEQSTARLRQHGIEVLDLNHTGNLSLYVDGADECDPNRCLIKGGGAALTREKIIAEASERFICIVDPSKQVPVLGKFPLPVEVIPMARSLVARQILALTGGQPVWRDGVVTDNGNVVLDVHNLQITDPVALERSLNQIPGVVCVGLFARRPADVVIVGGEPPRVL</sequence>
<comment type="function">
    <text evidence="1">Catalyzes the reversible conversion of ribose-5-phosphate to ribulose 5-phosphate.</text>
</comment>
<comment type="catalytic activity">
    <reaction evidence="1">
        <text>aldehydo-D-ribose 5-phosphate = D-ribulose 5-phosphate</text>
        <dbReference type="Rhea" id="RHEA:14657"/>
        <dbReference type="ChEBI" id="CHEBI:58121"/>
        <dbReference type="ChEBI" id="CHEBI:58273"/>
        <dbReference type="EC" id="5.3.1.6"/>
    </reaction>
</comment>
<comment type="pathway">
    <text evidence="1">Carbohydrate degradation; pentose phosphate pathway; D-ribose 5-phosphate from D-ribulose 5-phosphate (non-oxidative stage): step 1/1.</text>
</comment>
<comment type="subunit">
    <text evidence="1">Homodimer.</text>
</comment>
<comment type="similarity">
    <text evidence="1">Belongs to the ribose 5-phosphate isomerase family.</text>
</comment>
<accession>Q2P6P9</accession>
<feature type="chain" id="PRO_1000017029" description="Ribose-5-phosphate isomerase A">
    <location>
        <begin position="1"/>
        <end position="215"/>
    </location>
</feature>
<feature type="active site" description="Proton acceptor" evidence="1">
    <location>
        <position position="101"/>
    </location>
</feature>
<feature type="binding site" evidence="1">
    <location>
        <begin position="26"/>
        <end position="29"/>
    </location>
    <ligand>
        <name>substrate</name>
    </ligand>
</feature>
<feature type="binding site" evidence="1">
    <location>
        <begin position="79"/>
        <end position="82"/>
    </location>
    <ligand>
        <name>substrate</name>
    </ligand>
</feature>
<feature type="binding site" evidence="1">
    <location>
        <begin position="92"/>
        <end position="95"/>
    </location>
    <ligand>
        <name>substrate</name>
    </ligand>
</feature>
<feature type="binding site" evidence="1">
    <location>
        <position position="119"/>
    </location>
    <ligand>
        <name>substrate</name>
    </ligand>
</feature>
<evidence type="ECO:0000255" key="1">
    <source>
        <dbReference type="HAMAP-Rule" id="MF_00170"/>
    </source>
</evidence>
<gene>
    <name evidence="1" type="primary">rpiA</name>
    <name type="ordered locus">XOO1023</name>
</gene>
<reference key="1">
    <citation type="journal article" date="2005" name="Jpn. Agric. Res. Q.">
        <title>Genome sequence of Xanthomonas oryzae pv. oryzae suggests contribution of large numbers of effector genes and insertion sequences to its race diversity.</title>
        <authorList>
            <person name="Ochiai H."/>
            <person name="Inoue Y."/>
            <person name="Takeya M."/>
            <person name="Sasaki A."/>
            <person name="Kaku H."/>
        </authorList>
    </citation>
    <scope>NUCLEOTIDE SEQUENCE [LARGE SCALE GENOMIC DNA]</scope>
    <source>
        <strain>MAFF 311018</strain>
    </source>
</reference>